<evidence type="ECO:0000255" key="1">
    <source>
        <dbReference type="HAMAP-Rule" id="MF_00059"/>
    </source>
</evidence>
<evidence type="ECO:0000305" key="2"/>
<accession>Q6MJ36</accession>
<name>RPOA_BDEBA</name>
<sequence length="343" mass="38553">MQEHYYKFWREMIKPKGFEVDRDSLRDDYAKFIIRPLERGFGVTLGNSLRRILLSSMMGSAITAVKFEGVLHEFTTIPDVLEDVTDIILNLKEVRFKQYTADSLTLKISKKGPGKVTAADIQTTDKIEVLNPDLPIATLGANANFNAEIVVSFGRGYVPVENRETDLPVGFIGVDALYSPIRKVNYNVSNARVGQRTDYDALTLEVWTDGSLKPEEAVALSSKIMKEQLQIFLTFDETMEPAEEARELGSPTLNENLFRSVDDLELSVRSANCLKNANIRYIGELVVRSEAEMLKTKNFGRKSLNEIKEILGEMGLGLGMKIEGWPPAGWDPSQPPQKRETQQ</sequence>
<reference key="1">
    <citation type="journal article" date="2004" name="Science">
        <title>A predator unmasked: life cycle of Bdellovibrio bacteriovorus from a genomic perspective.</title>
        <authorList>
            <person name="Rendulic S."/>
            <person name="Jagtap P."/>
            <person name="Rosinus A."/>
            <person name="Eppinger M."/>
            <person name="Baar C."/>
            <person name="Lanz C."/>
            <person name="Keller H."/>
            <person name="Lambert C."/>
            <person name="Evans K.J."/>
            <person name="Goesmann A."/>
            <person name="Meyer F."/>
            <person name="Sockett R.E."/>
            <person name="Schuster S.C."/>
        </authorList>
    </citation>
    <scope>NUCLEOTIDE SEQUENCE [LARGE SCALE GENOMIC DNA]</scope>
    <source>
        <strain>ATCC 15356 / DSM 50701 / NCIMB 9529 / HD100</strain>
    </source>
</reference>
<proteinExistence type="inferred from homology"/>
<dbReference type="EC" id="2.7.7.6" evidence="1"/>
<dbReference type="EMBL" id="BX842654">
    <property type="protein sequence ID" value="CAE80725.1"/>
    <property type="status" value="ALT_INIT"/>
    <property type="molecule type" value="Genomic_DNA"/>
</dbReference>
<dbReference type="RefSeq" id="WP_038448232.1">
    <property type="nucleotide sequence ID" value="NC_005363.1"/>
</dbReference>
<dbReference type="SMR" id="Q6MJ36"/>
<dbReference type="STRING" id="264462.Bd2950"/>
<dbReference type="GeneID" id="93013815"/>
<dbReference type="KEGG" id="bba:Bd2950"/>
<dbReference type="eggNOG" id="COG0202">
    <property type="taxonomic scope" value="Bacteria"/>
</dbReference>
<dbReference type="HOGENOM" id="CLU_053084_0_1_7"/>
<dbReference type="Proteomes" id="UP000008080">
    <property type="component" value="Chromosome"/>
</dbReference>
<dbReference type="GO" id="GO:0005737">
    <property type="term" value="C:cytoplasm"/>
    <property type="evidence" value="ECO:0007669"/>
    <property type="project" value="UniProtKB-ARBA"/>
</dbReference>
<dbReference type="GO" id="GO:0000428">
    <property type="term" value="C:DNA-directed RNA polymerase complex"/>
    <property type="evidence" value="ECO:0007669"/>
    <property type="project" value="UniProtKB-KW"/>
</dbReference>
<dbReference type="GO" id="GO:0003677">
    <property type="term" value="F:DNA binding"/>
    <property type="evidence" value="ECO:0007669"/>
    <property type="project" value="UniProtKB-UniRule"/>
</dbReference>
<dbReference type="GO" id="GO:0003899">
    <property type="term" value="F:DNA-directed RNA polymerase activity"/>
    <property type="evidence" value="ECO:0007669"/>
    <property type="project" value="UniProtKB-UniRule"/>
</dbReference>
<dbReference type="GO" id="GO:0046983">
    <property type="term" value="F:protein dimerization activity"/>
    <property type="evidence" value="ECO:0007669"/>
    <property type="project" value="InterPro"/>
</dbReference>
<dbReference type="GO" id="GO:0006351">
    <property type="term" value="P:DNA-templated transcription"/>
    <property type="evidence" value="ECO:0007669"/>
    <property type="project" value="UniProtKB-UniRule"/>
</dbReference>
<dbReference type="CDD" id="cd06928">
    <property type="entry name" value="RNAP_alpha_NTD"/>
    <property type="match status" value="1"/>
</dbReference>
<dbReference type="FunFam" id="1.10.150.20:FF:000001">
    <property type="entry name" value="DNA-directed RNA polymerase subunit alpha"/>
    <property type="match status" value="1"/>
</dbReference>
<dbReference type="FunFam" id="2.170.120.12:FF:000001">
    <property type="entry name" value="DNA-directed RNA polymerase subunit alpha"/>
    <property type="match status" value="1"/>
</dbReference>
<dbReference type="Gene3D" id="1.10.150.20">
    <property type="entry name" value="5' to 3' exonuclease, C-terminal subdomain"/>
    <property type="match status" value="1"/>
</dbReference>
<dbReference type="Gene3D" id="2.170.120.12">
    <property type="entry name" value="DNA-directed RNA polymerase, insert domain"/>
    <property type="match status" value="1"/>
</dbReference>
<dbReference type="Gene3D" id="3.30.1360.10">
    <property type="entry name" value="RNA polymerase, RBP11-like subunit"/>
    <property type="match status" value="1"/>
</dbReference>
<dbReference type="HAMAP" id="MF_00059">
    <property type="entry name" value="RNApol_bact_RpoA"/>
    <property type="match status" value="1"/>
</dbReference>
<dbReference type="InterPro" id="IPR011262">
    <property type="entry name" value="DNA-dir_RNA_pol_insert"/>
</dbReference>
<dbReference type="InterPro" id="IPR011263">
    <property type="entry name" value="DNA-dir_RNA_pol_RpoA/D/Rpb3"/>
</dbReference>
<dbReference type="InterPro" id="IPR011773">
    <property type="entry name" value="DNA-dir_RpoA"/>
</dbReference>
<dbReference type="InterPro" id="IPR036603">
    <property type="entry name" value="RBP11-like"/>
</dbReference>
<dbReference type="InterPro" id="IPR011260">
    <property type="entry name" value="RNAP_asu_C"/>
</dbReference>
<dbReference type="InterPro" id="IPR036643">
    <property type="entry name" value="RNApol_insert_sf"/>
</dbReference>
<dbReference type="NCBIfam" id="NF003513">
    <property type="entry name" value="PRK05182.1-2"/>
    <property type="match status" value="1"/>
</dbReference>
<dbReference type="NCBIfam" id="NF003519">
    <property type="entry name" value="PRK05182.2-5"/>
    <property type="match status" value="1"/>
</dbReference>
<dbReference type="NCBIfam" id="TIGR02027">
    <property type="entry name" value="rpoA"/>
    <property type="match status" value="1"/>
</dbReference>
<dbReference type="Pfam" id="PF01000">
    <property type="entry name" value="RNA_pol_A_bac"/>
    <property type="match status" value="1"/>
</dbReference>
<dbReference type="Pfam" id="PF03118">
    <property type="entry name" value="RNA_pol_A_CTD"/>
    <property type="match status" value="1"/>
</dbReference>
<dbReference type="Pfam" id="PF01193">
    <property type="entry name" value="RNA_pol_L"/>
    <property type="match status" value="1"/>
</dbReference>
<dbReference type="SMART" id="SM00662">
    <property type="entry name" value="RPOLD"/>
    <property type="match status" value="1"/>
</dbReference>
<dbReference type="SUPFAM" id="SSF47789">
    <property type="entry name" value="C-terminal domain of RNA polymerase alpha subunit"/>
    <property type="match status" value="1"/>
</dbReference>
<dbReference type="SUPFAM" id="SSF56553">
    <property type="entry name" value="Insert subdomain of RNA polymerase alpha subunit"/>
    <property type="match status" value="1"/>
</dbReference>
<dbReference type="SUPFAM" id="SSF55257">
    <property type="entry name" value="RBP11-like subunits of RNA polymerase"/>
    <property type="match status" value="1"/>
</dbReference>
<organism>
    <name type="scientific">Bdellovibrio bacteriovorus (strain ATCC 15356 / DSM 50701 / NCIMB 9529 / HD100)</name>
    <dbReference type="NCBI Taxonomy" id="264462"/>
    <lineage>
        <taxon>Bacteria</taxon>
        <taxon>Pseudomonadati</taxon>
        <taxon>Bdellovibrionota</taxon>
        <taxon>Bdellovibrionia</taxon>
        <taxon>Bdellovibrionales</taxon>
        <taxon>Pseudobdellovibrionaceae</taxon>
        <taxon>Bdellovibrio</taxon>
    </lineage>
</organism>
<feature type="chain" id="PRO_0000175269" description="DNA-directed RNA polymerase subunit alpha">
    <location>
        <begin position="1"/>
        <end position="343"/>
    </location>
</feature>
<feature type="region of interest" description="Alpha N-terminal domain (alpha-NTD)" evidence="1">
    <location>
        <begin position="1"/>
        <end position="236"/>
    </location>
</feature>
<feature type="region of interest" description="Alpha C-terminal domain (alpha-CTD)" evidence="1">
    <location>
        <begin position="253"/>
        <end position="343"/>
    </location>
</feature>
<protein>
    <recommendedName>
        <fullName evidence="1">DNA-directed RNA polymerase subunit alpha</fullName>
        <shortName evidence="1">RNAP subunit alpha</shortName>
        <ecNumber evidence="1">2.7.7.6</ecNumber>
    </recommendedName>
    <alternativeName>
        <fullName evidence="1">RNA polymerase subunit alpha</fullName>
    </alternativeName>
    <alternativeName>
        <fullName evidence="1">Transcriptase subunit alpha</fullName>
    </alternativeName>
</protein>
<gene>
    <name evidence="1" type="primary">rpoA</name>
    <name type="ordered locus">Bd2950</name>
</gene>
<comment type="function">
    <text evidence="1">DNA-dependent RNA polymerase catalyzes the transcription of DNA into RNA using the four ribonucleoside triphosphates as substrates.</text>
</comment>
<comment type="catalytic activity">
    <reaction evidence="1">
        <text>RNA(n) + a ribonucleoside 5'-triphosphate = RNA(n+1) + diphosphate</text>
        <dbReference type="Rhea" id="RHEA:21248"/>
        <dbReference type="Rhea" id="RHEA-COMP:14527"/>
        <dbReference type="Rhea" id="RHEA-COMP:17342"/>
        <dbReference type="ChEBI" id="CHEBI:33019"/>
        <dbReference type="ChEBI" id="CHEBI:61557"/>
        <dbReference type="ChEBI" id="CHEBI:140395"/>
        <dbReference type="EC" id="2.7.7.6"/>
    </reaction>
</comment>
<comment type="subunit">
    <text evidence="1">Homodimer. The RNAP catalytic core consists of 2 alpha, 1 beta, 1 beta' and 1 omega subunit. When a sigma factor is associated with the core the holoenzyme is formed, which can initiate transcription.</text>
</comment>
<comment type="domain">
    <text evidence="1">The N-terminal domain is essential for RNAP assembly and basal transcription, whereas the C-terminal domain is involved in interaction with transcriptional regulators and with upstream promoter elements.</text>
</comment>
<comment type="similarity">
    <text evidence="1">Belongs to the RNA polymerase alpha chain family.</text>
</comment>
<comment type="sequence caution" evidence="2">
    <conflict type="erroneous initiation">
        <sequence resource="EMBL-CDS" id="CAE80725"/>
    </conflict>
</comment>
<keyword id="KW-0240">DNA-directed RNA polymerase</keyword>
<keyword id="KW-0548">Nucleotidyltransferase</keyword>
<keyword id="KW-1185">Reference proteome</keyword>
<keyword id="KW-0804">Transcription</keyword>
<keyword id="KW-0808">Transferase</keyword>